<reference key="1">
    <citation type="journal article" date="1992" name="Biochemistry">
        <title>Multiple members of the plasminogen-apolipoprotein(a) gene family associated with thrombosis.</title>
        <authorList>
            <person name="Ichinose A."/>
        </authorList>
    </citation>
    <scope>NUCLEOTIDE SEQUENCE [GENOMIC DNA]</scope>
</reference>
<reference key="2">
    <citation type="journal article" date="1999" name="Eur. J. Biochem.">
        <title>Homologous plasminogen N-terminal and plasminogen-related gene A and B peptides. Characterization of cDNAs and recombinant fusion proteins.</title>
        <authorList>
            <person name="Lewis V.O."/>
            <person name="Gehrmann M."/>
            <person name="Weissbach L."/>
            <person name="Hyman J.E."/>
            <person name="Rielly A."/>
            <person name="Jones D.G."/>
            <person name="Llinas M."/>
            <person name="Schaller J."/>
        </authorList>
    </citation>
    <scope>TISSUE SPECIFICITY</scope>
</reference>
<comment type="function">
    <text evidence="1">May bind non-covalently to lysine binding sites present in the kringle structures of plasminogen. This may interfere with the binding of fibrin or alpha-2-antiplasmin to plasminogen and may result in the localization of activity at sites necessary for extracellular matrix destruction (By similarity).</text>
</comment>
<comment type="subcellular location">
    <subcellularLocation>
        <location evidence="5">Secreted</location>
    </subcellularLocation>
</comment>
<comment type="tissue specificity">
    <text evidence="4">Expressed in liver.</text>
</comment>
<name>PLGA_HUMAN</name>
<proteinExistence type="evidence at protein level"/>
<protein>
    <recommendedName>
        <fullName>Plasminogen-like protein A</fullName>
    </recommendedName>
    <alternativeName>
        <fullName>Plasminogen-like protein A1</fullName>
    </alternativeName>
    <alternativeName>
        <fullName>Plasminogen-related protein A</fullName>
    </alternativeName>
</protein>
<evidence type="ECO:0000250" key="1"/>
<evidence type="ECO:0000255" key="2"/>
<evidence type="ECO:0000255" key="3">
    <source>
        <dbReference type="PROSITE-ProRule" id="PRU00315"/>
    </source>
</evidence>
<evidence type="ECO:0000269" key="4">
    <source>
    </source>
</evidence>
<evidence type="ECO:0000305" key="5"/>
<gene>
    <name type="primary">PLGLA</name>
    <name type="synonym">PLGLA1</name>
    <name type="synonym">PLGP2</name>
    <name type="synonym">PRGA</name>
</gene>
<sequence>MEHKEVVLLLLLFLKSGQGEPLDDYVNAQGASLFSVTKKQLGAGSREECAAKCEEDKEFTCRAFQYHSKEQQCVIMAENKKSSIIIRMRDVVLFEK</sequence>
<dbReference type="EMBL" id="M86873">
    <property type="protein sequence ID" value="AAA60168.1"/>
    <property type="molecule type" value="Genomic_DNA"/>
</dbReference>
<dbReference type="EMBL" id="M86871">
    <property type="protein sequence ID" value="AAA60168.1"/>
    <property type="status" value="JOINED"/>
    <property type="molecule type" value="Genomic_DNA"/>
</dbReference>
<dbReference type="EMBL" id="M86872">
    <property type="protein sequence ID" value="AAA60168.1"/>
    <property type="status" value="JOINED"/>
    <property type="molecule type" value="Genomic_DNA"/>
</dbReference>
<dbReference type="SMR" id="Q15195"/>
<dbReference type="FunCoup" id="Q15195">
    <property type="interactions" value="1"/>
</dbReference>
<dbReference type="iPTMnet" id="Q15195"/>
<dbReference type="PhosphoSitePlus" id="Q15195"/>
<dbReference type="BioMuta" id="HGNC:9074"/>
<dbReference type="DMDM" id="74706526"/>
<dbReference type="jPOST" id="Q15195"/>
<dbReference type="MassIVE" id="Q15195"/>
<dbReference type="ProteomicsDB" id="60487"/>
<dbReference type="AGR" id="HGNC:9074"/>
<dbReference type="GeneCards" id="PLGLA"/>
<dbReference type="HGNC" id="HGNC:9074">
    <property type="gene designation" value="PLGLA"/>
</dbReference>
<dbReference type="MIM" id="612212">
    <property type="type" value="gene"/>
</dbReference>
<dbReference type="neXtProt" id="NX_Q15195"/>
<dbReference type="InParanoid" id="Q15195"/>
<dbReference type="PAN-GO" id="Q15195">
    <property type="GO annotations" value="3 GO annotations based on evolutionary models"/>
</dbReference>
<dbReference type="PhylomeDB" id="Q15195"/>
<dbReference type="Pharos" id="Q15195">
    <property type="development level" value="Tdark"/>
</dbReference>
<dbReference type="PRO" id="PR:Q15195"/>
<dbReference type="Proteomes" id="UP000005640">
    <property type="component" value="Unplaced"/>
</dbReference>
<dbReference type="RNAct" id="Q15195">
    <property type="molecule type" value="protein"/>
</dbReference>
<dbReference type="GO" id="GO:0005576">
    <property type="term" value="C:extracellular region"/>
    <property type="evidence" value="ECO:0007669"/>
    <property type="project" value="UniProtKB-SubCell"/>
</dbReference>
<dbReference type="CDD" id="cd01099">
    <property type="entry name" value="PAN_AP_HGF"/>
    <property type="match status" value="1"/>
</dbReference>
<dbReference type="FunFam" id="3.50.4.10:FF:000011">
    <property type="entry name" value="Plasminogen"/>
    <property type="match status" value="1"/>
</dbReference>
<dbReference type="Gene3D" id="3.50.4.10">
    <property type="entry name" value="Hepatocyte Growth Factor"/>
    <property type="match status" value="1"/>
</dbReference>
<dbReference type="InterPro" id="IPR003609">
    <property type="entry name" value="Pan_app"/>
</dbReference>
<dbReference type="InterPro" id="IPR016351">
    <property type="entry name" value="Plasminogen-rel"/>
</dbReference>
<dbReference type="Pfam" id="PF00024">
    <property type="entry name" value="PAN_1"/>
    <property type="match status" value="1"/>
</dbReference>
<dbReference type="PIRSF" id="PIRSF002483">
    <property type="entry name" value="Plasminogen-related"/>
    <property type="match status" value="1"/>
</dbReference>
<dbReference type="SMART" id="SM00473">
    <property type="entry name" value="PAN_AP"/>
    <property type="match status" value="1"/>
</dbReference>
<dbReference type="SUPFAM" id="SSF57414">
    <property type="entry name" value="Hairpin loop containing domain-like"/>
    <property type="match status" value="1"/>
</dbReference>
<dbReference type="PROSITE" id="PS50948">
    <property type="entry name" value="PAN"/>
    <property type="match status" value="1"/>
</dbReference>
<accession>Q15195</accession>
<organism>
    <name type="scientific">Homo sapiens</name>
    <name type="common">Human</name>
    <dbReference type="NCBI Taxonomy" id="9606"/>
    <lineage>
        <taxon>Eukaryota</taxon>
        <taxon>Metazoa</taxon>
        <taxon>Chordata</taxon>
        <taxon>Craniata</taxon>
        <taxon>Vertebrata</taxon>
        <taxon>Euteleostomi</taxon>
        <taxon>Mammalia</taxon>
        <taxon>Eutheria</taxon>
        <taxon>Euarchontoglires</taxon>
        <taxon>Primates</taxon>
        <taxon>Haplorrhini</taxon>
        <taxon>Catarrhini</taxon>
        <taxon>Hominidae</taxon>
        <taxon>Homo</taxon>
    </lineage>
</organism>
<keyword id="KW-1015">Disulfide bond</keyword>
<keyword id="KW-1267">Proteomics identification</keyword>
<keyword id="KW-1185">Reference proteome</keyword>
<keyword id="KW-0964">Secreted</keyword>
<keyword id="KW-0732">Signal</keyword>
<feature type="signal peptide" evidence="2">
    <location>
        <begin position="1"/>
        <end position="19"/>
    </location>
</feature>
<feature type="chain" id="PRO_0000305905" description="Plasminogen-like protein A">
    <location>
        <begin position="20"/>
        <end position="96"/>
    </location>
</feature>
<feature type="domain" description="PAN" evidence="3">
    <location>
        <begin position="20"/>
        <end position="96"/>
    </location>
</feature>
<feature type="disulfide bond" evidence="3">
    <location>
        <begin position="49"/>
        <end position="73"/>
    </location>
</feature>
<feature type="disulfide bond" evidence="3">
    <location>
        <begin position="53"/>
        <end position="61"/>
    </location>
</feature>